<gene>
    <name type="primary">CYP4A25</name>
</gene>
<evidence type="ECO:0000250" key="1">
    <source>
        <dbReference type="UniProtKB" id="P51869"/>
    </source>
</evidence>
<evidence type="ECO:0000250" key="2">
    <source>
        <dbReference type="UniProtKB" id="Q02928"/>
    </source>
</evidence>
<evidence type="ECO:0000255" key="3"/>
<evidence type="ECO:0000305" key="4"/>
<accession>Q8SPK0</accession>
<reference key="1">
    <citation type="journal article" date="2002" name="Biochem. J.">
        <title>Cloning and expression of two novel pig liver and kidney fatty acid hydroxylases [cytochrome P450 (CYP)4A24 and CYP4A25].</title>
        <authorList>
            <person name="Lundell K."/>
        </authorList>
    </citation>
    <scope>NUCLEOTIDE SEQUENCE [MRNA]</scope>
</reference>
<proteinExistence type="evidence at transcript level"/>
<keyword id="KW-0256">Endoplasmic reticulum</keyword>
<keyword id="KW-0349">Heme</keyword>
<keyword id="KW-0408">Iron</keyword>
<keyword id="KW-0472">Membrane</keyword>
<keyword id="KW-0479">Metal-binding</keyword>
<keyword id="KW-0503">Monooxygenase</keyword>
<keyword id="KW-0521">NADP</keyword>
<keyword id="KW-0560">Oxidoreductase</keyword>
<keyword id="KW-1185">Reference proteome</keyword>
<keyword id="KW-0812">Transmembrane</keyword>
<keyword id="KW-1133">Transmembrane helix</keyword>
<sequence length="504" mass="57324">MTVPALASASGLLQVASLLGLLLLLLKAAQLYLRRQWLLKALQQFPSPPSHWLYGHSREFQEESELQPLLKRVEKYPSACARWLWGTRAMVLVYDPDYMKVVLARSEPKAPVLYRLLIPWIGCGLLLLNGQTWFQRRRMLTPAFHYDILKPYVGLMAKSVQVMLDKWEQLVAQDPRLEIVGPVSLMTLDTIMKCAFSHQGSAQTDGDSHSYIQAIWDLKNLFSIRTKSAFLQNDIIYRLSPEGRKNHRAARIAHQHTDRVIQLRKAQLQKQGEMENVRKKRHLDFLDILLLARMEKGNSLSDTDLRAEVDTFMFEGHDTTASGISWILYALASHPEHQQRCREEIQGLLGDGTSITWDHLDQMPYTTMCIKEALRLYPPVPGVSRELSKPITFPDGRSLPAGIILSLSVYSLHHNPQVWPNPEEFDPSRFAPGSARHSHAFMPFSGGSRNCIGKQFAMNEMKVAVALTLLRFELAPDPSRKPTVIPEVVLHSKNGIHLKLRKLP</sequence>
<feature type="chain" id="PRO_0000280744" description="Cytochrome P450 4A25">
    <location>
        <begin position="1"/>
        <end position="504"/>
    </location>
</feature>
<feature type="transmembrane region" description="Helical" evidence="3">
    <location>
        <begin position="6"/>
        <end position="26"/>
    </location>
</feature>
<feature type="transmembrane region" description="Helical" evidence="3">
    <location>
        <begin position="110"/>
        <end position="130"/>
    </location>
</feature>
<feature type="binding site" description="axial binding residue" evidence="1">
    <location>
        <position position="451"/>
    </location>
    <ligand>
        <name>heme</name>
        <dbReference type="ChEBI" id="CHEBI:30413"/>
    </ligand>
    <ligandPart>
        <name>Fe</name>
        <dbReference type="ChEBI" id="CHEBI:18248"/>
    </ligandPart>
</feature>
<organism>
    <name type="scientific">Sus scrofa</name>
    <name type="common">Pig</name>
    <dbReference type="NCBI Taxonomy" id="9823"/>
    <lineage>
        <taxon>Eukaryota</taxon>
        <taxon>Metazoa</taxon>
        <taxon>Chordata</taxon>
        <taxon>Craniata</taxon>
        <taxon>Vertebrata</taxon>
        <taxon>Euteleostomi</taxon>
        <taxon>Mammalia</taxon>
        <taxon>Eutheria</taxon>
        <taxon>Laurasiatheria</taxon>
        <taxon>Artiodactyla</taxon>
        <taxon>Suina</taxon>
        <taxon>Suidae</taxon>
        <taxon>Sus</taxon>
    </lineage>
</organism>
<protein>
    <recommendedName>
        <fullName>Cytochrome P450 4A25</fullName>
    </recommendedName>
    <alternativeName>
        <fullName>CYPIVA25</fullName>
    </alternativeName>
    <alternativeName>
        <fullName>Fatty acid omega-hydroxylase</fullName>
    </alternativeName>
    <alternativeName>
        <fullName>Long-chain fatty acid omega-monooxygenase</fullName>
        <ecNumber evidence="2">1.14.14.80</ecNumber>
    </alternativeName>
</protein>
<dbReference type="EC" id="1.14.14.80" evidence="2"/>
<dbReference type="EMBL" id="AJ318097">
    <property type="protein sequence ID" value="CAC85663.1"/>
    <property type="molecule type" value="mRNA"/>
</dbReference>
<dbReference type="SMR" id="Q8SPK0"/>
<dbReference type="FunCoup" id="Q8SPK0">
    <property type="interactions" value="12"/>
</dbReference>
<dbReference type="PeptideAtlas" id="Q8SPK0"/>
<dbReference type="InParanoid" id="Q8SPK0"/>
<dbReference type="Proteomes" id="UP000008227">
    <property type="component" value="Unplaced"/>
</dbReference>
<dbReference type="Proteomes" id="UP000314985">
    <property type="component" value="Unplaced"/>
</dbReference>
<dbReference type="Proteomes" id="UP000694570">
    <property type="component" value="Unplaced"/>
</dbReference>
<dbReference type="Proteomes" id="UP000694571">
    <property type="component" value="Unplaced"/>
</dbReference>
<dbReference type="Proteomes" id="UP000694720">
    <property type="component" value="Unplaced"/>
</dbReference>
<dbReference type="Proteomes" id="UP000694722">
    <property type="component" value="Unplaced"/>
</dbReference>
<dbReference type="Proteomes" id="UP000694723">
    <property type="component" value="Unplaced"/>
</dbReference>
<dbReference type="Proteomes" id="UP000694724">
    <property type="component" value="Unplaced"/>
</dbReference>
<dbReference type="Proteomes" id="UP000694725">
    <property type="component" value="Unplaced"/>
</dbReference>
<dbReference type="Proteomes" id="UP000694726">
    <property type="component" value="Unplaced"/>
</dbReference>
<dbReference type="Proteomes" id="UP000694727">
    <property type="component" value="Unplaced"/>
</dbReference>
<dbReference type="Proteomes" id="UP000694728">
    <property type="component" value="Unplaced"/>
</dbReference>
<dbReference type="GO" id="GO:0005789">
    <property type="term" value="C:endoplasmic reticulum membrane"/>
    <property type="evidence" value="ECO:0007669"/>
    <property type="project" value="UniProtKB-SubCell"/>
</dbReference>
<dbReference type="GO" id="GO:0020037">
    <property type="term" value="F:heme binding"/>
    <property type="evidence" value="ECO:0007669"/>
    <property type="project" value="InterPro"/>
</dbReference>
<dbReference type="GO" id="GO:0005506">
    <property type="term" value="F:iron ion binding"/>
    <property type="evidence" value="ECO:0007669"/>
    <property type="project" value="InterPro"/>
</dbReference>
<dbReference type="GO" id="GO:0102033">
    <property type="term" value="F:long-chain fatty acid omega-hydroxylase activity"/>
    <property type="evidence" value="ECO:0007669"/>
    <property type="project" value="UniProtKB-EC"/>
</dbReference>
<dbReference type="GO" id="GO:0006629">
    <property type="term" value="P:lipid metabolic process"/>
    <property type="evidence" value="ECO:0007669"/>
    <property type="project" value="UniProtKB-ARBA"/>
</dbReference>
<dbReference type="CDD" id="cd20678">
    <property type="entry name" value="CYP4B-like"/>
    <property type="match status" value="1"/>
</dbReference>
<dbReference type="FunFam" id="1.10.630.10:FF:000005">
    <property type="entry name" value="cytochrome P450 4F22 isoform X2"/>
    <property type="match status" value="1"/>
</dbReference>
<dbReference type="Gene3D" id="1.10.630.10">
    <property type="entry name" value="Cytochrome P450"/>
    <property type="match status" value="1"/>
</dbReference>
<dbReference type="InterPro" id="IPR001128">
    <property type="entry name" value="Cyt_P450"/>
</dbReference>
<dbReference type="InterPro" id="IPR017972">
    <property type="entry name" value="Cyt_P450_CS"/>
</dbReference>
<dbReference type="InterPro" id="IPR002401">
    <property type="entry name" value="Cyt_P450_E_grp-I"/>
</dbReference>
<dbReference type="InterPro" id="IPR036396">
    <property type="entry name" value="Cyt_P450_sf"/>
</dbReference>
<dbReference type="InterPro" id="IPR050196">
    <property type="entry name" value="Cytochrome_P450_Monoox"/>
</dbReference>
<dbReference type="PANTHER" id="PTHR24291:SF39">
    <property type="entry name" value="CYTOCHROME P450 4A11-RELATED"/>
    <property type="match status" value="1"/>
</dbReference>
<dbReference type="PANTHER" id="PTHR24291">
    <property type="entry name" value="CYTOCHROME P450 FAMILY 4"/>
    <property type="match status" value="1"/>
</dbReference>
<dbReference type="Pfam" id="PF00067">
    <property type="entry name" value="p450"/>
    <property type="match status" value="1"/>
</dbReference>
<dbReference type="PRINTS" id="PR00463">
    <property type="entry name" value="EP450I"/>
</dbReference>
<dbReference type="PRINTS" id="PR00385">
    <property type="entry name" value="P450"/>
</dbReference>
<dbReference type="SUPFAM" id="SSF48264">
    <property type="entry name" value="Cytochrome P450"/>
    <property type="match status" value="1"/>
</dbReference>
<dbReference type="PROSITE" id="PS00086">
    <property type="entry name" value="CYTOCHROME_P450"/>
    <property type="match status" value="1"/>
</dbReference>
<name>CP4AP_PIG</name>
<comment type="function">
    <text>Catalyzes the omega- and (omega-1)-hydroxylation of various fatty acids such as laurate and palmitate. Has no activity toward taurochenodeoxycholic acid.</text>
</comment>
<comment type="catalytic activity">
    <reaction evidence="2">
        <text>an omega-methyl-long-chain fatty acid + reduced [NADPH--hemoprotein reductase] + O2 = an omega-hydroxy-long-chain fatty acid + oxidized [NADPH--hemoprotein reductase] + H2O + H(+)</text>
        <dbReference type="Rhea" id="RHEA:56748"/>
        <dbReference type="Rhea" id="RHEA-COMP:11964"/>
        <dbReference type="Rhea" id="RHEA-COMP:11965"/>
        <dbReference type="ChEBI" id="CHEBI:15377"/>
        <dbReference type="ChEBI" id="CHEBI:15378"/>
        <dbReference type="ChEBI" id="CHEBI:15379"/>
        <dbReference type="ChEBI" id="CHEBI:57618"/>
        <dbReference type="ChEBI" id="CHEBI:58210"/>
        <dbReference type="ChEBI" id="CHEBI:140991"/>
        <dbReference type="ChEBI" id="CHEBI:140992"/>
        <dbReference type="EC" id="1.14.14.80"/>
    </reaction>
</comment>
<comment type="cofactor">
    <cofactor evidence="1">
        <name>heme</name>
        <dbReference type="ChEBI" id="CHEBI:30413"/>
    </cofactor>
</comment>
<comment type="subcellular location">
    <subcellularLocation>
        <location evidence="4">Endoplasmic reticulum membrane</location>
        <topology evidence="4">Multi-pass membrane protein</topology>
    </subcellularLocation>
</comment>
<comment type="similarity">
    <text evidence="4">Belongs to the cytochrome P450 family.</text>
</comment>